<protein>
    <recommendedName>
        <fullName>MICAL-like protein 1</fullName>
    </recommendedName>
</protein>
<dbReference type="EMBL" id="DAAA02014645">
    <property type="status" value="NOT_ANNOTATED_CDS"/>
    <property type="molecule type" value="Genomic_DNA"/>
</dbReference>
<dbReference type="SMR" id="E1BBG2"/>
<dbReference type="FunCoup" id="E1BBG2">
    <property type="interactions" value="932"/>
</dbReference>
<dbReference type="IntAct" id="E1BBG2">
    <property type="interactions" value="1"/>
</dbReference>
<dbReference type="STRING" id="9913.ENSBTAP00000026064"/>
<dbReference type="PaxDb" id="9913-ENSBTAP00000026064"/>
<dbReference type="eggNOG" id="ENOG502QWQX">
    <property type="taxonomic scope" value="Eukaryota"/>
</dbReference>
<dbReference type="HOGENOM" id="CLU_015382_1_0_1"/>
<dbReference type="InParanoid" id="E1BBG2"/>
<dbReference type="OrthoDB" id="8062037at2759"/>
<dbReference type="TreeFam" id="TF328311"/>
<dbReference type="Proteomes" id="UP000009136">
    <property type="component" value="Unplaced"/>
</dbReference>
<dbReference type="GO" id="GO:0005814">
    <property type="term" value="C:centriole"/>
    <property type="evidence" value="ECO:0000250"/>
    <property type="project" value="UniProtKB"/>
</dbReference>
<dbReference type="GO" id="GO:0060170">
    <property type="term" value="C:ciliary membrane"/>
    <property type="evidence" value="ECO:0007669"/>
    <property type="project" value="UniProtKB-SubCell"/>
</dbReference>
<dbReference type="GO" id="GO:0005929">
    <property type="term" value="C:cilium"/>
    <property type="evidence" value="ECO:0000250"/>
    <property type="project" value="UniProtKB"/>
</dbReference>
<dbReference type="GO" id="GO:0010009">
    <property type="term" value="C:cytoplasmic side of endosome membrane"/>
    <property type="evidence" value="ECO:0000250"/>
    <property type="project" value="UniProtKB"/>
</dbReference>
<dbReference type="GO" id="GO:0005770">
    <property type="term" value="C:late endosome"/>
    <property type="evidence" value="ECO:0000250"/>
    <property type="project" value="UniProtKB"/>
</dbReference>
<dbReference type="GO" id="GO:0031902">
    <property type="term" value="C:late endosome membrane"/>
    <property type="evidence" value="ECO:0007669"/>
    <property type="project" value="UniProtKB-SubCell"/>
</dbReference>
<dbReference type="GO" id="GO:0055038">
    <property type="term" value="C:recycling endosome membrane"/>
    <property type="evidence" value="ECO:0000250"/>
    <property type="project" value="UniProtKB"/>
</dbReference>
<dbReference type="GO" id="GO:0008093">
    <property type="term" value="F:cytoskeletal anchor activity"/>
    <property type="evidence" value="ECO:0000250"/>
    <property type="project" value="UniProtKB"/>
</dbReference>
<dbReference type="GO" id="GO:0046872">
    <property type="term" value="F:metal ion binding"/>
    <property type="evidence" value="ECO:0007669"/>
    <property type="project" value="UniProtKB-KW"/>
</dbReference>
<dbReference type="GO" id="GO:0070300">
    <property type="term" value="F:phosphatidic acid binding"/>
    <property type="evidence" value="ECO:0000250"/>
    <property type="project" value="UniProtKB"/>
</dbReference>
<dbReference type="GO" id="GO:0060271">
    <property type="term" value="P:cilium assembly"/>
    <property type="evidence" value="ECO:0000250"/>
    <property type="project" value="UniProtKB"/>
</dbReference>
<dbReference type="GO" id="GO:0032456">
    <property type="term" value="P:endocytic recycling"/>
    <property type="evidence" value="ECO:0000250"/>
    <property type="project" value="UniProtKB"/>
</dbReference>
<dbReference type="GO" id="GO:0006897">
    <property type="term" value="P:endocytosis"/>
    <property type="evidence" value="ECO:0000250"/>
    <property type="project" value="UniProtKB"/>
</dbReference>
<dbReference type="GO" id="GO:0031175">
    <property type="term" value="P:neuron projection development"/>
    <property type="evidence" value="ECO:0000250"/>
    <property type="project" value="UniProtKB"/>
</dbReference>
<dbReference type="GO" id="GO:0097320">
    <property type="term" value="P:plasma membrane tubulation"/>
    <property type="evidence" value="ECO:0000250"/>
    <property type="project" value="UniProtKB"/>
</dbReference>
<dbReference type="GO" id="GO:0061512">
    <property type="term" value="P:protein localization to cilium"/>
    <property type="evidence" value="ECO:0000250"/>
    <property type="project" value="UniProtKB"/>
</dbReference>
<dbReference type="GO" id="GO:0036010">
    <property type="term" value="P:protein localization to endosome"/>
    <property type="evidence" value="ECO:0000250"/>
    <property type="project" value="UniProtKB"/>
</dbReference>
<dbReference type="GO" id="GO:0006612">
    <property type="term" value="P:protein targeting to membrane"/>
    <property type="evidence" value="ECO:0000250"/>
    <property type="project" value="UniProtKB"/>
</dbReference>
<dbReference type="GO" id="GO:0015031">
    <property type="term" value="P:protein transport"/>
    <property type="evidence" value="ECO:0007669"/>
    <property type="project" value="UniProtKB-KW"/>
</dbReference>
<dbReference type="GO" id="GO:0006898">
    <property type="term" value="P:receptor-mediated endocytosis"/>
    <property type="evidence" value="ECO:0000250"/>
    <property type="project" value="UniProtKB"/>
</dbReference>
<dbReference type="GO" id="GO:0032458">
    <property type="term" value="P:slow endocytic recycling"/>
    <property type="evidence" value="ECO:0000250"/>
    <property type="project" value="UniProtKB"/>
</dbReference>
<dbReference type="CDD" id="cd21252">
    <property type="entry name" value="CH_MICALL1"/>
    <property type="match status" value="1"/>
</dbReference>
<dbReference type="CDD" id="cd09444">
    <property type="entry name" value="LIM_Mical_like_1"/>
    <property type="match status" value="1"/>
</dbReference>
<dbReference type="FunFam" id="2.10.110.10:FF:000100">
    <property type="entry name" value="MICAL-like protein 1"/>
    <property type="match status" value="1"/>
</dbReference>
<dbReference type="FunFam" id="1.10.418.10:FF:000055">
    <property type="entry name" value="MICAL-like protein 2"/>
    <property type="match status" value="1"/>
</dbReference>
<dbReference type="Gene3D" id="1.10.418.10">
    <property type="entry name" value="Calponin-like domain"/>
    <property type="match status" value="1"/>
</dbReference>
<dbReference type="Gene3D" id="2.10.110.10">
    <property type="entry name" value="Cysteine Rich Protein"/>
    <property type="match status" value="1"/>
</dbReference>
<dbReference type="InterPro" id="IPR022735">
    <property type="entry name" value="bMERB_dom"/>
</dbReference>
<dbReference type="InterPro" id="IPR001715">
    <property type="entry name" value="CH_dom"/>
</dbReference>
<dbReference type="InterPro" id="IPR036872">
    <property type="entry name" value="CH_dom_sf"/>
</dbReference>
<dbReference type="InterPro" id="IPR050540">
    <property type="entry name" value="F-actin_Monoox_Mical"/>
</dbReference>
<dbReference type="InterPro" id="IPR001781">
    <property type="entry name" value="Znf_LIM"/>
</dbReference>
<dbReference type="PANTHER" id="PTHR23167">
    <property type="entry name" value="CALPONIN HOMOLOGY DOMAIN-CONTAINING PROTEIN DDB_G0272472-RELATED"/>
    <property type="match status" value="1"/>
</dbReference>
<dbReference type="PANTHER" id="PTHR23167:SF89">
    <property type="entry name" value="MICAL-LIKE PROTEIN 1"/>
    <property type="match status" value="1"/>
</dbReference>
<dbReference type="Pfam" id="PF12130">
    <property type="entry name" value="bMERB_dom"/>
    <property type="match status" value="1"/>
</dbReference>
<dbReference type="Pfam" id="PF00307">
    <property type="entry name" value="CH"/>
    <property type="match status" value="1"/>
</dbReference>
<dbReference type="Pfam" id="PF00412">
    <property type="entry name" value="LIM"/>
    <property type="match status" value="1"/>
</dbReference>
<dbReference type="PRINTS" id="PR01217">
    <property type="entry name" value="PRICHEXTENSN"/>
</dbReference>
<dbReference type="SMART" id="SM00033">
    <property type="entry name" value="CH"/>
    <property type="match status" value="1"/>
</dbReference>
<dbReference type="SMART" id="SM01203">
    <property type="entry name" value="DUF3585"/>
    <property type="match status" value="1"/>
</dbReference>
<dbReference type="SMART" id="SM00132">
    <property type="entry name" value="LIM"/>
    <property type="match status" value="1"/>
</dbReference>
<dbReference type="SUPFAM" id="SSF47576">
    <property type="entry name" value="Calponin-homology domain, CH-domain"/>
    <property type="match status" value="1"/>
</dbReference>
<dbReference type="SUPFAM" id="SSF57716">
    <property type="entry name" value="Glucocorticoid receptor-like (DNA-binding domain)"/>
    <property type="match status" value="2"/>
</dbReference>
<dbReference type="PROSITE" id="PS51848">
    <property type="entry name" value="BMERB"/>
    <property type="match status" value="1"/>
</dbReference>
<dbReference type="PROSITE" id="PS50021">
    <property type="entry name" value="CH"/>
    <property type="match status" value="1"/>
</dbReference>
<dbReference type="PROSITE" id="PS00478">
    <property type="entry name" value="LIM_DOMAIN_1"/>
    <property type="match status" value="1"/>
</dbReference>
<dbReference type="PROSITE" id="PS50023">
    <property type="entry name" value="LIM_DOMAIN_2"/>
    <property type="match status" value="1"/>
</dbReference>
<name>MILK1_BOVIN</name>
<gene>
    <name type="primary">MICALL1</name>
</gene>
<feature type="chain" id="PRO_0000424556" description="MICAL-like protein 1">
    <location>
        <begin position="1"/>
        <end position="853"/>
    </location>
</feature>
<feature type="domain" description="Calponin-homology (CH)" evidence="5">
    <location>
        <begin position="2"/>
        <end position="108"/>
    </location>
</feature>
<feature type="domain" description="LIM zinc-binding" evidence="6">
    <location>
        <begin position="162"/>
        <end position="224"/>
    </location>
</feature>
<feature type="domain" description="bMERB" evidence="7">
    <location>
        <begin position="661"/>
        <end position="808"/>
    </location>
</feature>
<feature type="region of interest" description="Disordered" evidence="8">
    <location>
        <begin position="118"/>
        <end position="162"/>
    </location>
</feature>
<feature type="region of interest" description="Disordered" evidence="8">
    <location>
        <begin position="224"/>
        <end position="659"/>
    </location>
</feature>
<feature type="region of interest" description="Mediates the interaction with RAB13 and RAB35 and intramolecular interaction with the CH domain" evidence="1">
    <location>
        <begin position="642"/>
        <end position="853"/>
    </location>
</feature>
<feature type="region of interest" description="Necessary and sufficient to associate with tubular recycling endosome membranes, mediate phosphatidic acid-binding and membrane tubulation" evidence="1">
    <location>
        <begin position="690"/>
        <end position="853"/>
    </location>
</feature>
<feature type="coiled-coil region" evidence="4">
    <location>
        <begin position="671"/>
        <end position="701"/>
    </location>
</feature>
<feature type="coiled-coil region" evidence="4">
    <location>
        <begin position="791"/>
        <end position="820"/>
    </location>
</feature>
<feature type="short sequence motif" description="NPF1">
    <location>
        <begin position="419"/>
        <end position="421"/>
    </location>
</feature>
<feature type="short sequence motif" description="NPF2">
    <location>
        <begin position="623"/>
        <end position="625"/>
    </location>
</feature>
<feature type="compositionally biased region" description="Polar residues" evidence="8">
    <location>
        <begin position="145"/>
        <end position="162"/>
    </location>
</feature>
<feature type="compositionally biased region" description="Basic and acidic residues" evidence="8">
    <location>
        <begin position="355"/>
        <end position="366"/>
    </location>
</feature>
<feature type="compositionally biased region" description="Pro residues" evidence="8">
    <location>
        <begin position="381"/>
        <end position="394"/>
    </location>
</feature>
<feature type="compositionally biased region" description="Pro residues" evidence="8">
    <location>
        <begin position="429"/>
        <end position="445"/>
    </location>
</feature>
<feature type="compositionally biased region" description="Low complexity" evidence="8">
    <location>
        <begin position="495"/>
        <end position="515"/>
    </location>
</feature>
<feature type="compositionally biased region" description="Low complexity" evidence="8">
    <location>
        <begin position="541"/>
        <end position="553"/>
    </location>
</feature>
<feature type="compositionally biased region" description="Polar residues" evidence="8">
    <location>
        <begin position="607"/>
        <end position="618"/>
    </location>
</feature>
<feature type="modified residue" description="Phosphoserine" evidence="3">
    <location>
        <position position="292"/>
    </location>
</feature>
<feature type="modified residue" description="Phosphoserine" evidence="3">
    <location>
        <position position="306"/>
    </location>
</feature>
<feature type="modified residue" description="Phosphothreonine" evidence="2">
    <location>
        <position position="312"/>
    </location>
</feature>
<feature type="modified residue" description="Phosphothreonine" evidence="3">
    <location>
        <position position="315"/>
    </location>
</feature>
<feature type="modified residue" description="Phosphoserine" evidence="3">
    <location>
        <position position="388"/>
    </location>
</feature>
<feature type="modified residue" description="Phosphothreonine" evidence="3">
    <location>
        <position position="457"/>
    </location>
</feature>
<feature type="modified residue" description="Phosphothreonine" evidence="3">
    <location>
        <position position="459"/>
    </location>
</feature>
<feature type="modified residue" description="Phosphoserine" evidence="3">
    <location>
        <position position="460"/>
    </location>
</feature>
<feature type="modified residue" description="Phosphoserine" evidence="3">
    <location>
        <position position="461"/>
    </location>
</feature>
<feature type="modified residue" description="Phosphoserine" evidence="3">
    <location>
        <position position="474"/>
    </location>
</feature>
<feature type="modified residue" description="Phosphoserine" evidence="3">
    <location>
        <position position="476"/>
    </location>
</feature>
<feature type="modified residue" description="Phosphoserine" evidence="3">
    <location>
        <position position="568"/>
    </location>
</feature>
<feature type="modified residue" description="Phosphoserine" evidence="3">
    <location>
        <position position="611"/>
    </location>
</feature>
<feature type="modified residue" description="Phosphoserine" evidence="2">
    <location>
        <position position="730"/>
    </location>
</feature>
<reference key="1">
    <citation type="journal article" date="2009" name="Genome Biol.">
        <title>A whole-genome assembly of the domestic cow, Bos taurus.</title>
        <authorList>
            <person name="Zimin A.V."/>
            <person name="Delcher A.L."/>
            <person name="Florea L."/>
            <person name="Kelley D.R."/>
            <person name="Schatz M.C."/>
            <person name="Puiu D."/>
            <person name="Hanrahan F."/>
            <person name="Pertea G."/>
            <person name="Van Tassell C.P."/>
            <person name="Sonstegard T.S."/>
            <person name="Marcais G."/>
            <person name="Roberts M."/>
            <person name="Subramanian P."/>
            <person name="Yorke J.A."/>
            <person name="Salzberg S.L."/>
        </authorList>
    </citation>
    <scope>NUCLEOTIDE SEQUENCE [LARGE SCALE GENOMIC DNA]</scope>
    <source>
        <strain>Hereford</strain>
    </source>
</reference>
<reference key="2">
    <citation type="journal article" date="2009" name="Mol. Biol. Cell">
        <title>MICAL-L1 links EHD1 to tubular recycling endosomes and regulates receptor recycling.</title>
        <authorList>
            <person name="Sharma M."/>
            <person name="Giridharan S.S."/>
            <person name="Rahajeng J."/>
            <person name="Naslavsky N."/>
            <person name="Caplan S."/>
        </authorList>
    </citation>
    <scope>INTERACTION WITH EHD1</scope>
</reference>
<reference key="3">
    <citation type="journal article" date="2010" name="J. Biol. Chem.">
        <title>Collapsin response mediator protein-2 (Crmp2) regulates trafficking by linking endocytic regulatory proteins to dynein motors.</title>
        <authorList>
            <person name="Rahajeng J."/>
            <person name="Giridharan S.S."/>
            <person name="Naslavsky N."/>
            <person name="Caplan S."/>
        </authorList>
    </citation>
    <scope>INTERACTION WITH DPYSL2</scope>
</reference>
<reference key="4">
    <citation type="journal article" date="2013" name="Mol. Biol. Cell">
        <title>Cooperation of MICAL-L1, syndapin2, and phosphatidic acid in tubular recycling endosome biogenesis.</title>
        <authorList>
            <person name="Giridharan S.S."/>
            <person name="Cai B."/>
            <person name="Vitale N."/>
            <person name="Naslavsky N."/>
            <person name="Caplan S."/>
        </authorList>
    </citation>
    <scope>INTERACTION WITH PACSIN2</scope>
</reference>
<comment type="function">
    <text evidence="2 3">Lipid-binding protein with higher affinity for phosphatidic acid, a lipid enriched in recycling endosome membranes. On endosome membranes, acts as a downstream effector of Rab proteins recruiting cytosolic proteins to regulate membrane tubulation. Involved in a late step of receptor-mediated endocytosis regulating for instance endocytosed-EGF receptor trafficking. Alternatively, regulates slow endocytic recycling of endocytosed proteins back to the plasma membrane. Also involved in cargo protein delivery to the plasma membrane. Plays a role in ciliogenesis coordination, recruits EHD1 to primary cilium where it is anchored to the centriole through interaction with tubulins (By similarity). May indirectly play a role in neurite outgrowth (By similarity).</text>
</comment>
<comment type="subunit">
    <text evidence="9 10 11 12">Homooligomer (Probable). Interacts (via NPF1 motif) with EHD1 (via EH domain); the interaction is direct and probably recruits EHD1 to membranes. Interacts with EHD3 (via EH domain). Interacts with RAB35 (GTP-bound form); the interaction is direct and probably recruits MICALL1 to membranes. Interacts with ACAP2; the interaction is indirect through RAB35. Interacts with RAB8A (GTP-bound form); regulates RAB8A association with recycling endosomes. Interacts with RAB13 (GTP-bound form). Interacts with ARF6 (GTP-bound form). Interacts with PACSIN2 (via the SH3 domain). Interacts with DPYSL2.</text>
</comment>
<comment type="subcellular location">
    <subcellularLocation>
        <location evidence="3">Recycling endosome membrane</location>
        <topology evidence="3">Peripheral membrane protein</topology>
    </subcellularLocation>
    <subcellularLocation>
        <location evidence="3">Late endosome membrane</location>
    </subcellularLocation>
    <subcellularLocation>
        <location evidence="3">Cell projection</location>
        <location evidence="3">Cilium membrane</location>
        <topology evidence="3">Peripheral membrane protein</topology>
    </subcellularLocation>
    <subcellularLocation>
        <location evidence="3">Cytoplasm</location>
        <location evidence="3">Cytoskeleton</location>
        <location evidence="3">Microtubule organizing center</location>
        <location evidence="3">Centrosome</location>
        <location evidence="3">Centriole</location>
    </subcellularLocation>
    <text evidence="3">Localization to late endosomes is actin-dependent. Association to tubular recycling endosomes is regulated by RAB35 and ARF6. Interaction with tubulins achors MICALL1 to the centriole.</text>
</comment>
<comment type="domain">
    <text evidence="3">Probably exists in a closed and an opened conformation due to interaction of the C-terminal RAB-binding domain (RBD), also described as bivalent Mical/EHBP Rab binding (bMERB) domain, with the N-terminal calponin-homology (CH) domain. The conformational change is regulated by RAB13 and may modulate MICALL1 interactions with functional partners.</text>
</comment>
<evidence type="ECO:0000250" key="1"/>
<evidence type="ECO:0000250" key="2">
    <source>
        <dbReference type="UniProtKB" id="Q8BGT6"/>
    </source>
</evidence>
<evidence type="ECO:0000250" key="3">
    <source>
        <dbReference type="UniProtKB" id="Q8N3F8"/>
    </source>
</evidence>
<evidence type="ECO:0000255" key="4"/>
<evidence type="ECO:0000255" key="5">
    <source>
        <dbReference type="PROSITE-ProRule" id="PRU00044"/>
    </source>
</evidence>
<evidence type="ECO:0000255" key="6">
    <source>
        <dbReference type="PROSITE-ProRule" id="PRU00125"/>
    </source>
</evidence>
<evidence type="ECO:0000255" key="7">
    <source>
        <dbReference type="PROSITE-ProRule" id="PRU01195"/>
    </source>
</evidence>
<evidence type="ECO:0000256" key="8">
    <source>
        <dbReference type="SAM" id="MobiDB-lite"/>
    </source>
</evidence>
<evidence type="ECO:0000269" key="9">
    <source>
    </source>
</evidence>
<evidence type="ECO:0000269" key="10">
    <source>
    </source>
</evidence>
<evidence type="ECO:0000269" key="11">
    <source>
    </source>
</evidence>
<evidence type="ECO:0000305" key="12"/>
<keyword id="KW-1003">Cell membrane</keyword>
<keyword id="KW-0966">Cell projection</keyword>
<keyword id="KW-0175">Coiled coil</keyword>
<keyword id="KW-0963">Cytoplasm</keyword>
<keyword id="KW-0206">Cytoskeleton</keyword>
<keyword id="KW-0254">Endocytosis</keyword>
<keyword id="KW-0967">Endosome</keyword>
<keyword id="KW-0440">LIM domain</keyword>
<keyword id="KW-0472">Membrane</keyword>
<keyword id="KW-0479">Metal-binding</keyword>
<keyword id="KW-0597">Phosphoprotein</keyword>
<keyword id="KW-0653">Protein transport</keyword>
<keyword id="KW-1185">Reference proteome</keyword>
<keyword id="KW-0813">Transport</keyword>
<keyword id="KW-0862">Zinc</keyword>
<accession>E1BBG2</accession>
<sequence length="853" mass="92095">MAGPRGALLAWCRRQCEGYRGVDIRDLSSSFRDGLAFCAILHRHRPDLLDFDSLSKDNVFENNRLAFEVAEKELGIPALLDPNDMVSMSVPDCLSIMTYVSQYYNHFAGSGPAGVSSPRKGLVLSSPPSEASTPADPGDRAQGEECSSGSLSKQGSHRTPSSTCAACQQHVHLVQRYLADGKLYHRHCFRCRRCSSTLLPGAYRNGPEEGTFVCAEHCARLGPSGRSGARPGTPPQPKQQQLTEEAKEVEGGSPSPKATAGAEADVPKASPEGRPQVPTKPRVPGRPQELASPPASRPTPAPRKASESTAPTPPTPRPRSSLQQENLVEQGGGSGLVNGKLQEPPIPKPRGTPKLSERTPAPRKDPPWITLVQAEPKKKPAPLPPSSSPGPPPGQEGRQVENGGVDKAAPRGPEPKPYNPFEEEEEEPPAAPSPAPGPAPTPPESTPKSLHPWYGITPTSSPKTKKRPAPRAPSTSPLTLHASRLSRSEPPSATPSPALSVESLSSESSSQAPSEELLEPPVVPKSSSEPAVHAPGTPGTSASLSANSSLSSSGELVQPSMDRTPQASPGLAPNSRGSPGPPPAKPCSGTAPTPLVLVGDKSPAPSPGTSSPQLQVKSSCKENPFNRKPSPTASPSVKKATKGSKPARPPAPGHGFPLIKRKVQSDQYIPEEDIHGEIDTIERQLDALEHRGVLLEEKLRGGVNEGREDDMLVDWFKLIHEKHLLVRRESELIYVFKQQNLEQRQADVEYELRCLLNKPEKDWTEEDRGREKVLMQELVTLIEQRNAIVNCLDEDRQREEEEDKMLEAMIKKKEFQKETEPEGKKKGKFKTMKVLKLLGNKRDTKSKCPGDRS</sequence>
<proteinExistence type="evidence at protein level"/>
<organism>
    <name type="scientific">Bos taurus</name>
    <name type="common">Bovine</name>
    <dbReference type="NCBI Taxonomy" id="9913"/>
    <lineage>
        <taxon>Eukaryota</taxon>
        <taxon>Metazoa</taxon>
        <taxon>Chordata</taxon>
        <taxon>Craniata</taxon>
        <taxon>Vertebrata</taxon>
        <taxon>Euteleostomi</taxon>
        <taxon>Mammalia</taxon>
        <taxon>Eutheria</taxon>
        <taxon>Laurasiatheria</taxon>
        <taxon>Artiodactyla</taxon>
        <taxon>Ruminantia</taxon>
        <taxon>Pecora</taxon>
        <taxon>Bovidae</taxon>
        <taxon>Bovinae</taxon>
        <taxon>Bos</taxon>
    </lineage>
</organism>